<accession>A5U2R2</accession>
<reference key="1">
    <citation type="journal article" date="2008" name="PLoS ONE">
        <title>Genetic basis of virulence attenuation revealed by comparative genomic analysis of Mycobacterium tuberculosis strain H37Ra versus H37Rv.</title>
        <authorList>
            <person name="Zheng H."/>
            <person name="Lu L."/>
            <person name="Wang B."/>
            <person name="Pu S."/>
            <person name="Zhang X."/>
            <person name="Zhu G."/>
            <person name="Shi W."/>
            <person name="Zhang L."/>
            <person name="Wang H."/>
            <person name="Wang S."/>
            <person name="Zhao G."/>
            <person name="Zhang Y."/>
        </authorList>
    </citation>
    <scope>NUCLEOTIDE SEQUENCE [LARGE SCALE GENOMIC DNA]</scope>
    <source>
        <strain>ATCC 25177 / H37Ra</strain>
    </source>
</reference>
<dbReference type="EMBL" id="CP000611">
    <property type="protein sequence ID" value="ABQ73312.1"/>
    <property type="molecule type" value="Genomic_DNA"/>
</dbReference>
<dbReference type="RefSeq" id="WP_003407771.1">
    <property type="nucleotide sequence ID" value="NZ_CP016972.1"/>
</dbReference>
<dbReference type="SMR" id="A5U2R2"/>
<dbReference type="KEGG" id="mra:MRA_1567"/>
<dbReference type="eggNOG" id="COG3080">
    <property type="taxonomic scope" value="Bacteria"/>
</dbReference>
<dbReference type="HOGENOM" id="CLU_168367_0_0_11"/>
<dbReference type="Proteomes" id="UP000001988">
    <property type="component" value="Chromosome"/>
</dbReference>
<dbReference type="GO" id="GO:0045283">
    <property type="term" value="C:fumarate reductase complex"/>
    <property type="evidence" value="ECO:0007669"/>
    <property type="project" value="UniProtKB-UniRule"/>
</dbReference>
<dbReference type="GO" id="GO:0005886">
    <property type="term" value="C:plasma membrane"/>
    <property type="evidence" value="ECO:0007669"/>
    <property type="project" value="UniProtKB-SubCell"/>
</dbReference>
<dbReference type="GO" id="GO:0000104">
    <property type="term" value="F:succinate dehydrogenase activity"/>
    <property type="evidence" value="ECO:0007669"/>
    <property type="project" value="UniProtKB-UniRule"/>
</dbReference>
<dbReference type="GO" id="GO:0006106">
    <property type="term" value="P:fumarate metabolic process"/>
    <property type="evidence" value="ECO:0007669"/>
    <property type="project" value="InterPro"/>
</dbReference>
<dbReference type="Gene3D" id="1.20.1300.10">
    <property type="entry name" value="Fumarate reductase/succinate dehydrogenase, transmembrane subunit"/>
    <property type="match status" value="1"/>
</dbReference>
<dbReference type="HAMAP" id="MF_00709">
    <property type="entry name" value="Fumarate_red_D"/>
    <property type="match status" value="1"/>
</dbReference>
<dbReference type="InterPro" id="IPR003418">
    <property type="entry name" value="Fumarate_red_D"/>
</dbReference>
<dbReference type="InterPro" id="IPR034804">
    <property type="entry name" value="SQR/QFR_C/D"/>
</dbReference>
<dbReference type="NCBIfam" id="NF003977">
    <property type="entry name" value="PRK05470.1-1"/>
    <property type="match status" value="1"/>
</dbReference>
<dbReference type="Pfam" id="PF02313">
    <property type="entry name" value="Fumarate_red_D"/>
    <property type="match status" value="1"/>
</dbReference>
<dbReference type="PIRSF" id="PIRSF000179">
    <property type="entry name" value="FrdD"/>
    <property type="match status" value="1"/>
</dbReference>
<dbReference type="SUPFAM" id="SSF81343">
    <property type="entry name" value="Fumarate reductase respiratory complex transmembrane subunits"/>
    <property type="match status" value="1"/>
</dbReference>
<comment type="function">
    <text evidence="1">Anchors the catalytic components of the fumarate reductase complex to the cell membrane, binds quinones.</text>
</comment>
<comment type="subunit">
    <text evidence="1">Part of an enzyme complex containing four subunits: a flavoprotein (FrdA), an iron-sulfur protein (FrdB), and two hydrophobic anchor proteins (FrdC and FrdD).</text>
</comment>
<comment type="subcellular location">
    <subcellularLocation>
        <location evidence="1">Cell membrane</location>
        <topology evidence="1">Multi-pass membrane protein</topology>
    </subcellularLocation>
</comment>
<comment type="similarity">
    <text evidence="1">Belongs to the FrdD family.</text>
</comment>
<feature type="chain" id="PRO_1000045556" description="Fumarate reductase subunit D">
    <location>
        <begin position="1"/>
        <end position="125"/>
    </location>
</feature>
<feature type="transmembrane region" description="Helical" evidence="1">
    <location>
        <begin position="29"/>
        <end position="49"/>
    </location>
</feature>
<feature type="transmembrane region" description="Helical" evidence="1">
    <location>
        <begin position="64"/>
        <end position="84"/>
    </location>
</feature>
<feature type="transmembrane region" description="Helical" evidence="1">
    <location>
        <begin position="102"/>
        <end position="122"/>
    </location>
</feature>
<sequence length="125" mass="13754">MTPSTSDARSRRRSAEPFLWLLFSAGGMVTALVAPVLLLLFGLAFPLGWLDAPDHGHLLAMVRNPITKLVVLVLVVLALFHAAHRFRFVLDHGLQLGRFDRVIALWCYGMAVLGSATAGWMLLTM</sequence>
<proteinExistence type="inferred from homology"/>
<name>FRDD_MYCTA</name>
<organism>
    <name type="scientific">Mycobacterium tuberculosis (strain ATCC 25177 / H37Ra)</name>
    <dbReference type="NCBI Taxonomy" id="419947"/>
    <lineage>
        <taxon>Bacteria</taxon>
        <taxon>Bacillati</taxon>
        <taxon>Actinomycetota</taxon>
        <taxon>Actinomycetes</taxon>
        <taxon>Mycobacteriales</taxon>
        <taxon>Mycobacteriaceae</taxon>
        <taxon>Mycobacterium</taxon>
        <taxon>Mycobacterium tuberculosis complex</taxon>
    </lineage>
</organism>
<keyword id="KW-1003">Cell membrane</keyword>
<keyword id="KW-0472">Membrane</keyword>
<keyword id="KW-1185">Reference proteome</keyword>
<keyword id="KW-0812">Transmembrane</keyword>
<keyword id="KW-1133">Transmembrane helix</keyword>
<evidence type="ECO:0000255" key="1">
    <source>
        <dbReference type="HAMAP-Rule" id="MF_00709"/>
    </source>
</evidence>
<protein>
    <recommendedName>
        <fullName evidence="1">Fumarate reductase subunit D</fullName>
    </recommendedName>
    <alternativeName>
        <fullName evidence="1">Quinol-fumarate reductase subunit D</fullName>
        <shortName evidence="1">QFR subunit D</shortName>
    </alternativeName>
</protein>
<gene>
    <name evidence="1" type="primary">frdD</name>
    <name type="ordered locus">MRA_1567</name>
</gene>